<dbReference type="EC" id="5.3.1.28" evidence="1"/>
<dbReference type="EMBL" id="AE005674">
    <property type="protein sequence ID" value="AAN41932.2"/>
    <property type="molecule type" value="Genomic_DNA"/>
</dbReference>
<dbReference type="EMBL" id="AE014073">
    <property type="protein sequence ID" value="AAP15818.1"/>
    <property type="molecule type" value="Genomic_DNA"/>
</dbReference>
<dbReference type="RefSeq" id="NP_706225.2">
    <property type="nucleotide sequence ID" value="NC_004337.2"/>
</dbReference>
<dbReference type="SMR" id="P63227"/>
<dbReference type="STRING" id="198214.SF0272"/>
<dbReference type="PaxDb" id="198214-SF0272"/>
<dbReference type="GeneID" id="1027423"/>
<dbReference type="KEGG" id="sfl:SF0272"/>
<dbReference type="KEGG" id="sfx:S0293"/>
<dbReference type="PATRIC" id="fig|198214.7.peg.312"/>
<dbReference type="HOGENOM" id="CLU_080999_4_0_6"/>
<dbReference type="UniPathway" id="UPA00041">
    <property type="reaction ID" value="UER00436"/>
</dbReference>
<dbReference type="UniPathway" id="UPA00958"/>
<dbReference type="Proteomes" id="UP000001006">
    <property type="component" value="Chromosome"/>
</dbReference>
<dbReference type="Proteomes" id="UP000002673">
    <property type="component" value="Chromosome"/>
</dbReference>
<dbReference type="GO" id="GO:0005737">
    <property type="term" value="C:cytoplasm"/>
    <property type="evidence" value="ECO:0007669"/>
    <property type="project" value="UniProtKB-SubCell"/>
</dbReference>
<dbReference type="GO" id="GO:0097367">
    <property type="term" value="F:carbohydrate derivative binding"/>
    <property type="evidence" value="ECO:0007669"/>
    <property type="project" value="InterPro"/>
</dbReference>
<dbReference type="GO" id="GO:0008968">
    <property type="term" value="F:D-sedoheptulose 7-phosphate isomerase activity"/>
    <property type="evidence" value="ECO:0007669"/>
    <property type="project" value="UniProtKB-UniRule"/>
</dbReference>
<dbReference type="GO" id="GO:0008270">
    <property type="term" value="F:zinc ion binding"/>
    <property type="evidence" value="ECO:0007669"/>
    <property type="project" value="UniProtKB-UniRule"/>
</dbReference>
<dbReference type="GO" id="GO:2001061">
    <property type="term" value="P:D-glycero-D-manno-heptose 7-phosphate biosynthetic process"/>
    <property type="evidence" value="ECO:0007669"/>
    <property type="project" value="UniProtKB-UniPathway"/>
</dbReference>
<dbReference type="GO" id="GO:0009244">
    <property type="term" value="P:lipopolysaccharide core region biosynthetic process"/>
    <property type="evidence" value="ECO:0007669"/>
    <property type="project" value="UniProtKB-UniPathway"/>
</dbReference>
<dbReference type="CDD" id="cd05006">
    <property type="entry name" value="SIS_GmhA"/>
    <property type="match status" value="1"/>
</dbReference>
<dbReference type="FunFam" id="3.40.50.10490:FF:000013">
    <property type="entry name" value="Phosphoheptose isomerase"/>
    <property type="match status" value="1"/>
</dbReference>
<dbReference type="Gene3D" id="3.40.50.10490">
    <property type="entry name" value="Glucose-6-phosphate isomerase like protein, domain 1"/>
    <property type="match status" value="1"/>
</dbReference>
<dbReference type="HAMAP" id="MF_00067">
    <property type="entry name" value="GmhA"/>
    <property type="match status" value="1"/>
</dbReference>
<dbReference type="InterPro" id="IPR035461">
    <property type="entry name" value="GmhA/DiaA"/>
</dbReference>
<dbReference type="InterPro" id="IPR004515">
    <property type="entry name" value="Phosphoheptose_Isoase"/>
</dbReference>
<dbReference type="InterPro" id="IPR001347">
    <property type="entry name" value="SIS_dom"/>
</dbReference>
<dbReference type="InterPro" id="IPR046348">
    <property type="entry name" value="SIS_dom_sf"/>
</dbReference>
<dbReference type="InterPro" id="IPR050099">
    <property type="entry name" value="SIS_GmhA/DiaA_subfam"/>
</dbReference>
<dbReference type="NCBIfam" id="TIGR00441">
    <property type="entry name" value="gmhA"/>
    <property type="match status" value="1"/>
</dbReference>
<dbReference type="NCBIfam" id="NF001628">
    <property type="entry name" value="PRK00414.1"/>
    <property type="match status" value="1"/>
</dbReference>
<dbReference type="PANTHER" id="PTHR30390:SF7">
    <property type="entry name" value="PHOSPHOHEPTOSE ISOMERASE"/>
    <property type="match status" value="1"/>
</dbReference>
<dbReference type="PANTHER" id="PTHR30390">
    <property type="entry name" value="SEDOHEPTULOSE 7-PHOSPHATE ISOMERASE / DNAA INITIATOR-ASSOCIATING FACTOR FOR REPLICATION INITIATION"/>
    <property type="match status" value="1"/>
</dbReference>
<dbReference type="Pfam" id="PF13580">
    <property type="entry name" value="SIS_2"/>
    <property type="match status" value="1"/>
</dbReference>
<dbReference type="SUPFAM" id="SSF53697">
    <property type="entry name" value="SIS domain"/>
    <property type="match status" value="1"/>
</dbReference>
<dbReference type="PROSITE" id="PS51464">
    <property type="entry name" value="SIS"/>
    <property type="match status" value="1"/>
</dbReference>
<proteinExistence type="inferred from homology"/>
<evidence type="ECO:0000255" key="1">
    <source>
        <dbReference type="HAMAP-Rule" id="MF_00067"/>
    </source>
</evidence>
<reference key="1">
    <citation type="journal article" date="2002" name="Nucleic Acids Res.">
        <title>Genome sequence of Shigella flexneri 2a: insights into pathogenicity through comparison with genomes of Escherichia coli K12 and O157.</title>
        <authorList>
            <person name="Jin Q."/>
            <person name="Yuan Z."/>
            <person name="Xu J."/>
            <person name="Wang Y."/>
            <person name="Shen Y."/>
            <person name="Lu W."/>
            <person name="Wang J."/>
            <person name="Liu H."/>
            <person name="Yang J."/>
            <person name="Yang F."/>
            <person name="Zhang X."/>
            <person name="Zhang J."/>
            <person name="Yang G."/>
            <person name="Wu H."/>
            <person name="Qu D."/>
            <person name="Dong J."/>
            <person name="Sun L."/>
            <person name="Xue Y."/>
            <person name="Zhao A."/>
            <person name="Gao Y."/>
            <person name="Zhu J."/>
            <person name="Kan B."/>
            <person name="Ding K."/>
            <person name="Chen S."/>
            <person name="Cheng H."/>
            <person name="Yao Z."/>
            <person name="He B."/>
            <person name="Chen R."/>
            <person name="Ma D."/>
            <person name="Qiang B."/>
            <person name="Wen Y."/>
            <person name="Hou Y."/>
            <person name="Yu J."/>
        </authorList>
    </citation>
    <scope>NUCLEOTIDE SEQUENCE [LARGE SCALE GENOMIC DNA]</scope>
    <source>
        <strain>301 / Serotype 2a</strain>
    </source>
</reference>
<reference key="2">
    <citation type="journal article" date="2003" name="Infect. Immun.">
        <title>Complete genome sequence and comparative genomics of Shigella flexneri serotype 2a strain 2457T.</title>
        <authorList>
            <person name="Wei J."/>
            <person name="Goldberg M.B."/>
            <person name="Burland V."/>
            <person name="Venkatesan M.M."/>
            <person name="Deng W."/>
            <person name="Fournier G."/>
            <person name="Mayhew G.F."/>
            <person name="Plunkett G. III"/>
            <person name="Rose D.J."/>
            <person name="Darling A."/>
            <person name="Mau B."/>
            <person name="Perna N.T."/>
            <person name="Payne S.M."/>
            <person name="Runyen-Janecky L.J."/>
            <person name="Zhou S."/>
            <person name="Schwartz D.C."/>
            <person name="Blattner F.R."/>
        </authorList>
    </citation>
    <scope>NUCLEOTIDE SEQUENCE [LARGE SCALE GENOMIC DNA]</scope>
    <source>
        <strain>ATCC 700930 / 2457T / Serotype 2a</strain>
    </source>
</reference>
<name>GMHA_SHIFL</name>
<accession>P63227</accession>
<accession>P51001</accession>
<sequence length="192" mass="20815">MYQDLIRNELNEAAETLANFLKDDANIHAIQRAAVLLADSFKAGGKVLSCGNGGSHCDAMHFAEELTGRYRENRPGYPAIAISDVSHISCVGNDFGFNDIFSRYVEAVGREGDVLLGISTSGNSANVIKAIAAAREKGMKVITLTGKDGGKMAGTADIEIRVPHFGYADRIQEIHIKVIHILIQLIEKEMVK</sequence>
<gene>
    <name evidence="1" type="primary">gmhA</name>
    <name type="ordered locus">SF0272</name>
    <name type="ordered locus">S0293</name>
</gene>
<organism>
    <name type="scientific">Shigella flexneri</name>
    <dbReference type="NCBI Taxonomy" id="623"/>
    <lineage>
        <taxon>Bacteria</taxon>
        <taxon>Pseudomonadati</taxon>
        <taxon>Pseudomonadota</taxon>
        <taxon>Gammaproteobacteria</taxon>
        <taxon>Enterobacterales</taxon>
        <taxon>Enterobacteriaceae</taxon>
        <taxon>Shigella</taxon>
    </lineage>
</organism>
<protein>
    <recommendedName>
        <fullName evidence="1">Phosphoheptose isomerase</fullName>
        <ecNumber evidence="1">5.3.1.28</ecNumber>
    </recommendedName>
    <alternativeName>
        <fullName evidence="1">Sedoheptulose 7-phosphate isomerase</fullName>
    </alternativeName>
</protein>
<keyword id="KW-0119">Carbohydrate metabolism</keyword>
<keyword id="KW-0963">Cytoplasm</keyword>
<keyword id="KW-0413">Isomerase</keyword>
<keyword id="KW-0448">Lipopolysaccharide biosynthesis</keyword>
<keyword id="KW-0479">Metal-binding</keyword>
<keyword id="KW-1185">Reference proteome</keyword>
<keyword id="KW-0862">Zinc</keyword>
<feature type="chain" id="PRO_0000136545" description="Phosphoheptose isomerase">
    <location>
        <begin position="1"/>
        <end position="192"/>
    </location>
</feature>
<feature type="domain" description="SIS" evidence="1">
    <location>
        <begin position="37"/>
        <end position="192"/>
    </location>
</feature>
<feature type="binding site" evidence="1">
    <location>
        <begin position="52"/>
        <end position="54"/>
    </location>
    <ligand>
        <name>substrate</name>
    </ligand>
</feature>
<feature type="binding site" evidence="1">
    <location>
        <position position="61"/>
    </location>
    <ligand>
        <name>Zn(2+)</name>
        <dbReference type="ChEBI" id="CHEBI:29105"/>
    </ligand>
</feature>
<feature type="binding site" evidence="1">
    <location>
        <position position="65"/>
    </location>
    <ligand>
        <name>substrate</name>
    </ligand>
</feature>
<feature type="binding site" evidence="1">
    <location>
        <position position="65"/>
    </location>
    <ligand>
        <name>Zn(2+)</name>
        <dbReference type="ChEBI" id="CHEBI:29105"/>
    </ligand>
</feature>
<feature type="binding site" evidence="1">
    <location>
        <begin position="93"/>
        <end position="94"/>
    </location>
    <ligand>
        <name>substrate</name>
    </ligand>
</feature>
<feature type="binding site" evidence="1">
    <location>
        <begin position="119"/>
        <end position="121"/>
    </location>
    <ligand>
        <name>substrate</name>
    </ligand>
</feature>
<feature type="binding site" evidence="1">
    <location>
        <position position="124"/>
    </location>
    <ligand>
        <name>substrate</name>
    </ligand>
</feature>
<feature type="binding site" evidence="1">
    <location>
        <position position="172"/>
    </location>
    <ligand>
        <name>substrate</name>
    </ligand>
</feature>
<feature type="binding site" evidence="1">
    <location>
        <position position="172"/>
    </location>
    <ligand>
        <name>Zn(2+)</name>
        <dbReference type="ChEBI" id="CHEBI:29105"/>
    </ligand>
</feature>
<feature type="binding site" evidence="1">
    <location>
        <position position="180"/>
    </location>
    <ligand>
        <name>Zn(2+)</name>
        <dbReference type="ChEBI" id="CHEBI:29105"/>
    </ligand>
</feature>
<comment type="function">
    <text evidence="1">Catalyzes the isomerization of sedoheptulose 7-phosphate in D-glycero-D-manno-heptose 7-phosphate.</text>
</comment>
<comment type="catalytic activity">
    <reaction evidence="1">
        <text>2 D-sedoheptulose 7-phosphate = D-glycero-alpha-D-manno-heptose 7-phosphate + D-glycero-beta-D-manno-heptose 7-phosphate</text>
        <dbReference type="Rhea" id="RHEA:27489"/>
        <dbReference type="ChEBI" id="CHEBI:57483"/>
        <dbReference type="ChEBI" id="CHEBI:60203"/>
        <dbReference type="ChEBI" id="CHEBI:60204"/>
        <dbReference type="EC" id="5.3.1.28"/>
    </reaction>
</comment>
<comment type="cofactor">
    <cofactor evidence="1">
        <name>Zn(2+)</name>
        <dbReference type="ChEBI" id="CHEBI:29105"/>
    </cofactor>
    <text evidence="1">Binds 1 zinc ion per subunit.</text>
</comment>
<comment type="pathway">
    <text evidence="1">Carbohydrate biosynthesis; D-glycero-D-manno-heptose 7-phosphate biosynthesis; D-glycero-alpha-D-manno-heptose 7-phosphate and D-glycero-beta-D-manno-heptose 7-phosphate from sedoheptulose 7-phosphate: step 1/1.</text>
</comment>
<comment type="pathway">
    <text>Bacterial outer membrane biogenesis; LPS core biosynthesis.</text>
</comment>
<comment type="subunit">
    <text evidence="1">Homotetramer.</text>
</comment>
<comment type="subcellular location">
    <subcellularLocation>
        <location evidence="1">Cytoplasm</location>
    </subcellularLocation>
</comment>
<comment type="miscellaneous">
    <text evidence="1">The reaction produces a racemic mixture of D-glycero-alpha-D-manno-heptose 7-phosphate and D-glycero-beta-D-manno-heptose 7-phosphate.</text>
</comment>
<comment type="similarity">
    <text evidence="1">Belongs to the SIS family. GmhA subfamily.</text>
</comment>